<gene>
    <name evidence="1" type="primary">gcvT</name>
    <name type="ordered locus">Amet_1354</name>
</gene>
<proteinExistence type="inferred from homology"/>
<organism>
    <name type="scientific">Alkaliphilus metalliredigens (strain QYMF)</name>
    <dbReference type="NCBI Taxonomy" id="293826"/>
    <lineage>
        <taxon>Bacteria</taxon>
        <taxon>Bacillati</taxon>
        <taxon>Bacillota</taxon>
        <taxon>Clostridia</taxon>
        <taxon>Peptostreptococcales</taxon>
        <taxon>Natronincolaceae</taxon>
        <taxon>Alkaliphilus</taxon>
    </lineage>
</organism>
<name>GCST_ALKMQ</name>
<comment type="function">
    <text evidence="1">The glycine cleavage system catalyzes the degradation of glycine.</text>
</comment>
<comment type="catalytic activity">
    <reaction evidence="1">
        <text>N(6)-[(R)-S(8)-aminomethyldihydrolipoyl]-L-lysyl-[protein] + (6S)-5,6,7,8-tetrahydrofolate = N(6)-[(R)-dihydrolipoyl]-L-lysyl-[protein] + (6R)-5,10-methylene-5,6,7,8-tetrahydrofolate + NH4(+)</text>
        <dbReference type="Rhea" id="RHEA:16945"/>
        <dbReference type="Rhea" id="RHEA-COMP:10475"/>
        <dbReference type="Rhea" id="RHEA-COMP:10492"/>
        <dbReference type="ChEBI" id="CHEBI:15636"/>
        <dbReference type="ChEBI" id="CHEBI:28938"/>
        <dbReference type="ChEBI" id="CHEBI:57453"/>
        <dbReference type="ChEBI" id="CHEBI:83100"/>
        <dbReference type="ChEBI" id="CHEBI:83143"/>
        <dbReference type="EC" id="2.1.2.10"/>
    </reaction>
</comment>
<comment type="subunit">
    <text evidence="1">The glycine cleavage system is composed of four proteins: P, T, L and H.</text>
</comment>
<comment type="similarity">
    <text evidence="1">Belongs to the GcvT family.</text>
</comment>
<dbReference type="EC" id="2.1.2.10" evidence="1"/>
<dbReference type="EMBL" id="CP000724">
    <property type="protein sequence ID" value="ABR47554.1"/>
    <property type="molecule type" value="Genomic_DNA"/>
</dbReference>
<dbReference type="RefSeq" id="WP_012062595.1">
    <property type="nucleotide sequence ID" value="NC_009633.1"/>
</dbReference>
<dbReference type="SMR" id="A6TMY6"/>
<dbReference type="STRING" id="293826.Amet_1354"/>
<dbReference type="KEGG" id="amt:Amet_1354"/>
<dbReference type="eggNOG" id="COG0404">
    <property type="taxonomic scope" value="Bacteria"/>
</dbReference>
<dbReference type="HOGENOM" id="CLU_007884_10_2_9"/>
<dbReference type="OrthoDB" id="9774591at2"/>
<dbReference type="Proteomes" id="UP000001572">
    <property type="component" value="Chromosome"/>
</dbReference>
<dbReference type="GO" id="GO:0005829">
    <property type="term" value="C:cytosol"/>
    <property type="evidence" value="ECO:0007669"/>
    <property type="project" value="TreeGrafter"/>
</dbReference>
<dbReference type="GO" id="GO:0005960">
    <property type="term" value="C:glycine cleavage complex"/>
    <property type="evidence" value="ECO:0007669"/>
    <property type="project" value="InterPro"/>
</dbReference>
<dbReference type="GO" id="GO:0004047">
    <property type="term" value="F:aminomethyltransferase activity"/>
    <property type="evidence" value="ECO:0007669"/>
    <property type="project" value="UniProtKB-UniRule"/>
</dbReference>
<dbReference type="GO" id="GO:0008483">
    <property type="term" value="F:transaminase activity"/>
    <property type="evidence" value="ECO:0007669"/>
    <property type="project" value="UniProtKB-KW"/>
</dbReference>
<dbReference type="GO" id="GO:0019464">
    <property type="term" value="P:glycine decarboxylation via glycine cleavage system"/>
    <property type="evidence" value="ECO:0007669"/>
    <property type="project" value="UniProtKB-UniRule"/>
</dbReference>
<dbReference type="FunFam" id="2.40.30.110:FF:000003">
    <property type="entry name" value="Aminomethyltransferase"/>
    <property type="match status" value="1"/>
</dbReference>
<dbReference type="FunFam" id="3.30.70.1400:FF:000001">
    <property type="entry name" value="Aminomethyltransferase"/>
    <property type="match status" value="1"/>
</dbReference>
<dbReference type="FunFam" id="4.10.1250.10:FF:000001">
    <property type="entry name" value="Aminomethyltransferase"/>
    <property type="match status" value="1"/>
</dbReference>
<dbReference type="Gene3D" id="2.40.30.110">
    <property type="entry name" value="Aminomethyltransferase beta-barrel domains"/>
    <property type="match status" value="1"/>
</dbReference>
<dbReference type="Gene3D" id="3.30.70.1400">
    <property type="entry name" value="Aminomethyltransferase beta-barrel domains"/>
    <property type="match status" value="1"/>
</dbReference>
<dbReference type="Gene3D" id="4.10.1250.10">
    <property type="entry name" value="Aminomethyltransferase fragment"/>
    <property type="match status" value="1"/>
</dbReference>
<dbReference type="Gene3D" id="3.30.1360.120">
    <property type="entry name" value="Probable tRNA modification gtpase trme, domain 1"/>
    <property type="match status" value="1"/>
</dbReference>
<dbReference type="HAMAP" id="MF_00259">
    <property type="entry name" value="GcvT"/>
    <property type="match status" value="1"/>
</dbReference>
<dbReference type="InterPro" id="IPR006223">
    <property type="entry name" value="GCS_T"/>
</dbReference>
<dbReference type="InterPro" id="IPR022903">
    <property type="entry name" value="GCS_T_bac"/>
</dbReference>
<dbReference type="InterPro" id="IPR013977">
    <property type="entry name" value="GCST_C"/>
</dbReference>
<dbReference type="InterPro" id="IPR006222">
    <property type="entry name" value="GCV_T_N"/>
</dbReference>
<dbReference type="InterPro" id="IPR028896">
    <property type="entry name" value="GcvT/YgfZ/DmdA"/>
</dbReference>
<dbReference type="InterPro" id="IPR029043">
    <property type="entry name" value="GcvT/YgfZ_C"/>
</dbReference>
<dbReference type="InterPro" id="IPR027266">
    <property type="entry name" value="TrmE/GcvT_dom1"/>
</dbReference>
<dbReference type="NCBIfam" id="TIGR00528">
    <property type="entry name" value="gcvT"/>
    <property type="match status" value="1"/>
</dbReference>
<dbReference type="NCBIfam" id="NF001567">
    <property type="entry name" value="PRK00389.1"/>
    <property type="match status" value="1"/>
</dbReference>
<dbReference type="PANTHER" id="PTHR43757">
    <property type="entry name" value="AMINOMETHYLTRANSFERASE"/>
    <property type="match status" value="1"/>
</dbReference>
<dbReference type="PANTHER" id="PTHR43757:SF2">
    <property type="entry name" value="AMINOMETHYLTRANSFERASE, MITOCHONDRIAL"/>
    <property type="match status" value="1"/>
</dbReference>
<dbReference type="Pfam" id="PF01571">
    <property type="entry name" value="GCV_T"/>
    <property type="match status" value="1"/>
</dbReference>
<dbReference type="Pfam" id="PF08669">
    <property type="entry name" value="GCV_T_C"/>
    <property type="match status" value="1"/>
</dbReference>
<dbReference type="PIRSF" id="PIRSF006487">
    <property type="entry name" value="GcvT"/>
    <property type="match status" value="1"/>
</dbReference>
<dbReference type="SUPFAM" id="SSF101790">
    <property type="entry name" value="Aminomethyltransferase beta-barrel domain"/>
    <property type="match status" value="1"/>
</dbReference>
<dbReference type="SUPFAM" id="SSF103025">
    <property type="entry name" value="Folate-binding domain"/>
    <property type="match status" value="1"/>
</dbReference>
<accession>A6TMY6</accession>
<feature type="chain" id="PRO_1000059077" description="Aminomethyltransferase">
    <location>
        <begin position="1"/>
        <end position="369"/>
    </location>
</feature>
<protein>
    <recommendedName>
        <fullName evidence="1">Aminomethyltransferase</fullName>
        <ecNumber evidence="1">2.1.2.10</ecNumber>
    </recommendedName>
    <alternativeName>
        <fullName evidence="1">Glycine cleavage system T protein</fullName>
    </alternativeName>
</protein>
<sequence length="369" mass="41950">MENSKKTPLFTVYEKHKGKLIDFGGWAMPVQFEGIIPEHEAVRSNAGLFDVSHMGEVEIKGKDALNFVQYLITNDASQMEKNQIIYSFMCYENGGVVDDLLVYKFEEDYFYLVINAGNIEKDYEWMLKQSTAYDVEVNNISNDVSELALQGPKAEKILQKLTETDLSQLQFFYLQRDVTIDGVNCLISRTGYTGEDGFEIYVNPSDAVQLWEKLLEVGQEDGLKPIGLGARDTLRFEAALPLYGHEINRDITPLEAGFGFAVKLKKEVDFLGKKALIEQKEAGLTRKLVGFEMKDRGIPRSDYEVYHQGEKIGFVTTGYFSPTLKRNIGLALIDAKYAELGNEVDILIRKKQVKAELISKTFYKKNYKK</sequence>
<reference key="1">
    <citation type="journal article" date="2016" name="Genome Announc.">
        <title>Complete genome sequence of Alkaliphilus metalliredigens strain QYMF, an alkaliphilic and metal-reducing bacterium isolated from borax-contaminated leachate ponds.</title>
        <authorList>
            <person name="Hwang C."/>
            <person name="Copeland A."/>
            <person name="Lucas S."/>
            <person name="Lapidus A."/>
            <person name="Barry K."/>
            <person name="Detter J.C."/>
            <person name="Glavina Del Rio T."/>
            <person name="Hammon N."/>
            <person name="Israni S."/>
            <person name="Dalin E."/>
            <person name="Tice H."/>
            <person name="Pitluck S."/>
            <person name="Chertkov O."/>
            <person name="Brettin T."/>
            <person name="Bruce D."/>
            <person name="Han C."/>
            <person name="Schmutz J."/>
            <person name="Larimer F."/>
            <person name="Land M.L."/>
            <person name="Hauser L."/>
            <person name="Kyrpides N."/>
            <person name="Mikhailova N."/>
            <person name="Ye Q."/>
            <person name="Zhou J."/>
            <person name="Richardson P."/>
            <person name="Fields M.W."/>
        </authorList>
    </citation>
    <scope>NUCLEOTIDE SEQUENCE [LARGE SCALE GENOMIC DNA]</scope>
    <source>
        <strain>QYMF</strain>
    </source>
</reference>
<evidence type="ECO:0000255" key="1">
    <source>
        <dbReference type="HAMAP-Rule" id="MF_00259"/>
    </source>
</evidence>
<keyword id="KW-0032">Aminotransferase</keyword>
<keyword id="KW-1185">Reference proteome</keyword>
<keyword id="KW-0808">Transferase</keyword>